<evidence type="ECO:0000255" key="1">
    <source>
        <dbReference type="HAMAP-Rule" id="MF_00318"/>
    </source>
</evidence>
<gene>
    <name evidence="1" type="primary">eno</name>
</gene>
<reference key="1">
    <citation type="submission" date="1999-06" db="EMBL/GenBank/DDBJ databases">
        <title>Streptococcus intermedius enolase gene.</title>
        <authorList>
            <person name="Sato S."/>
        </authorList>
    </citation>
    <scope>NUCLEOTIDE SEQUENCE [GENOMIC DNA]</scope>
    <source>
        <strain>ATCC 27335 / CIP 103248 / DSM 20573 / LMG 17840 / NCTC 11324</strain>
    </source>
</reference>
<organism>
    <name type="scientific">Streptococcus intermedius</name>
    <dbReference type="NCBI Taxonomy" id="1338"/>
    <lineage>
        <taxon>Bacteria</taxon>
        <taxon>Bacillati</taxon>
        <taxon>Bacillota</taxon>
        <taxon>Bacilli</taxon>
        <taxon>Lactobacillales</taxon>
        <taxon>Streptococcaceae</taxon>
        <taxon>Streptococcus</taxon>
        <taxon>Streptococcus anginosus group</taxon>
    </lineage>
</organism>
<accession>Q9XDS7</accession>
<dbReference type="EC" id="4.2.1.11" evidence="1"/>
<dbReference type="EMBL" id="AB029313">
    <property type="protein sequence ID" value="BAA81815.1"/>
    <property type="molecule type" value="Genomic_DNA"/>
</dbReference>
<dbReference type="SMR" id="Q9XDS7"/>
<dbReference type="STRING" id="1338.A6J72_01000"/>
<dbReference type="UniPathway" id="UPA00109">
    <property type="reaction ID" value="UER00187"/>
</dbReference>
<dbReference type="GO" id="GO:0009986">
    <property type="term" value="C:cell surface"/>
    <property type="evidence" value="ECO:0007669"/>
    <property type="project" value="UniProtKB-SubCell"/>
</dbReference>
<dbReference type="GO" id="GO:0005576">
    <property type="term" value="C:extracellular region"/>
    <property type="evidence" value="ECO:0007669"/>
    <property type="project" value="UniProtKB-SubCell"/>
</dbReference>
<dbReference type="GO" id="GO:0009274">
    <property type="term" value="C:peptidoglycan-based cell wall"/>
    <property type="evidence" value="ECO:0007669"/>
    <property type="project" value="UniProtKB-ARBA"/>
</dbReference>
<dbReference type="GO" id="GO:0000015">
    <property type="term" value="C:phosphopyruvate hydratase complex"/>
    <property type="evidence" value="ECO:0007669"/>
    <property type="project" value="InterPro"/>
</dbReference>
<dbReference type="GO" id="GO:0000287">
    <property type="term" value="F:magnesium ion binding"/>
    <property type="evidence" value="ECO:0007669"/>
    <property type="project" value="UniProtKB-UniRule"/>
</dbReference>
<dbReference type="GO" id="GO:0004634">
    <property type="term" value="F:phosphopyruvate hydratase activity"/>
    <property type="evidence" value="ECO:0007669"/>
    <property type="project" value="UniProtKB-UniRule"/>
</dbReference>
<dbReference type="GO" id="GO:0006096">
    <property type="term" value="P:glycolytic process"/>
    <property type="evidence" value="ECO:0007669"/>
    <property type="project" value="UniProtKB-UniRule"/>
</dbReference>
<dbReference type="CDD" id="cd03313">
    <property type="entry name" value="enolase"/>
    <property type="match status" value="1"/>
</dbReference>
<dbReference type="FunFam" id="3.20.20.120:FF:000001">
    <property type="entry name" value="Enolase"/>
    <property type="match status" value="1"/>
</dbReference>
<dbReference type="FunFam" id="3.30.390.10:FF:000001">
    <property type="entry name" value="Enolase"/>
    <property type="match status" value="1"/>
</dbReference>
<dbReference type="Gene3D" id="3.20.20.120">
    <property type="entry name" value="Enolase-like C-terminal domain"/>
    <property type="match status" value="1"/>
</dbReference>
<dbReference type="Gene3D" id="3.30.390.10">
    <property type="entry name" value="Enolase-like, N-terminal domain"/>
    <property type="match status" value="1"/>
</dbReference>
<dbReference type="HAMAP" id="MF_00318">
    <property type="entry name" value="Enolase"/>
    <property type="match status" value="1"/>
</dbReference>
<dbReference type="InterPro" id="IPR000941">
    <property type="entry name" value="Enolase"/>
</dbReference>
<dbReference type="InterPro" id="IPR036849">
    <property type="entry name" value="Enolase-like_C_sf"/>
</dbReference>
<dbReference type="InterPro" id="IPR029017">
    <property type="entry name" value="Enolase-like_N"/>
</dbReference>
<dbReference type="InterPro" id="IPR020810">
    <property type="entry name" value="Enolase_C"/>
</dbReference>
<dbReference type="InterPro" id="IPR020809">
    <property type="entry name" value="Enolase_CS"/>
</dbReference>
<dbReference type="InterPro" id="IPR020811">
    <property type="entry name" value="Enolase_N"/>
</dbReference>
<dbReference type="NCBIfam" id="TIGR01060">
    <property type="entry name" value="eno"/>
    <property type="match status" value="1"/>
</dbReference>
<dbReference type="PANTHER" id="PTHR11902">
    <property type="entry name" value="ENOLASE"/>
    <property type="match status" value="1"/>
</dbReference>
<dbReference type="PANTHER" id="PTHR11902:SF1">
    <property type="entry name" value="ENOLASE"/>
    <property type="match status" value="1"/>
</dbReference>
<dbReference type="Pfam" id="PF00113">
    <property type="entry name" value="Enolase_C"/>
    <property type="match status" value="1"/>
</dbReference>
<dbReference type="Pfam" id="PF03952">
    <property type="entry name" value="Enolase_N"/>
    <property type="match status" value="1"/>
</dbReference>
<dbReference type="PIRSF" id="PIRSF001400">
    <property type="entry name" value="Enolase"/>
    <property type="match status" value="1"/>
</dbReference>
<dbReference type="PRINTS" id="PR00148">
    <property type="entry name" value="ENOLASE"/>
</dbReference>
<dbReference type="SFLD" id="SFLDS00001">
    <property type="entry name" value="Enolase"/>
    <property type="match status" value="1"/>
</dbReference>
<dbReference type="SFLD" id="SFLDF00002">
    <property type="entry name" value="enolase"/>
    <property type="match status" value="1"/>
</dbReference>
<dbReference type="SMART" id="SM01192">
    <property type="entry name" value="Enolase_C"/>
    <property type="match status" value="1"/>
</dbReference>
<dbReference type="SMART" id="SM01193">
    <property type="entry name" value="Enolase_N"/>
    <property type="match status" value="1"/>
</dbReference>
<dbReference type="SUPFAM" id="SSF51604">
    <property type="entry name" value="Enolase C-terminal domain-like"/>
    <property type="match status" value="1"/>
</dbReference>
<dbReference type="SUPFAM" id="SSF54826">
    <property type="entry name" value="Enolase N-terminal domain-like"/>
    <property type="match status" value="1"/>
</dbReference>
<dbReference type="PROSITE" id="PS00164">
    <property type="entry name" value="ENOLASE"/>
    <property type="match status" value="1"/>
</dbReference>
<protein>
    <recommendedName>
        <fullName evidence="1">Enolase</fullName>
        <ecNumber evidence="1">4.2.1.11</ecNumber>
    </recommendedName>
    <alternativeName>
        <fullName evidence="1">2-phospho-D-glycerate hydro-lyase</fullName>
    </alternativeName>
    <alternativeName>
        <fullName evidence="1">2-phosphoglycerate dehydratase</fullName>
    </alternativeName>
</protein>
<comment type="function">
    <text evidence="1">Catalyzes the reversible conversion of 2-phosphoglycerate (2-PG) into phosphoenolpyruvate (PEP). It is essential for the degradation of carbohydrates via glycolysis.</text>
</comment>
<comment type="catalytic activity">
    <reaction evidence="1">
        <text>(2R)-2-phosphoglycerate = phosphoenolpyruvate + H2O</text>
        <dbReference type="Rhea" id="RHEA:10164"/>
        <dbReference type="ChEBI" id="CHEBI:15377"/>
        <dbReference type="ChEBI" id="CHEBI:58289"/>
        <dbReference type="ChEBI" id="CHEBI:58702"/>
        <dbReference type="EC" id="4.2.1.11"/>
    </reaction>
</comment>
<comment type="cofactor">
    <cofactor evidence="1">
        <name>Mg(2+)</name>
        <dbReference type="ChEBI" id="CHEBI:18420"/>
    </cofactor>
    <text evidence="1">Binds a second Mg(2+) ion via substrate during catalysis.</text>
</comment>
<comment type="pathway">
    <text evidence="1">Carbohydrate degradation; glycolysis; pyruvate from D-glyceraldehyde 3-phosphate: step 4/5.</text>
</comment>
<comment type="subcellular location">
    <subcellularLocation>
        <location evidence="1">Cytoplasm</location>
    </subcellularLocation>
    <subcellularLocation>
        <location evidence="1">Secreted</location>
    </subcellularLocation>
    <subcellularLocation>
        <location evidence="1">Cell surface</location>
    </subcellularLocation>
    <text evidence="1">Fractions of enolase are present in both the cytoplasm and on the cell surface.</text>
</comment>
<comment type="similarity">
    <text evidence="1">Belongs to the enolase family.</text>
</comment>
<keyword id="KW-0963">Cytoplasm</keyword>
<keyword id="KW-0324">Glycolysis</keyword>
<keyword id="KW-0456">Lyase</keyword>
<keyword id="KW-0460">Magnesium</keyword>
<keyword id="KW-0479">Metal-binding</keyword>
<keyword id="KW-0964">Secreted</keyword>
<feature type="chain" id="PRO_0000133978" description="Enolase">
    <location>
        <begin position="1"/>
        <end position="434"/>
    </location>
</feature>
<feature type="active site" description="Proton donor" evidence="1">
    <location>
        <position position="205"/>
    </location>
</feature>
<feature type="active site" description="Proton acceptor" evidence="1">
    <location>
        <position position="343"/>
    </location>
</feature>
<feature type="binding site" evidence="1">
    <location>
        <position position="163"/>
    </location>
    <ligand>
        <name>(2R)-2-phosphoglycerate</name>
        <dbReference type="ChEBI" id="CHEBI:58289"/>
    </ligand>
</feature>
<feature type="binding site" evidence="1">
    <location>
        <position position="242"/>
    </location>
    <ligand>
        <name>Mg(2+)</name>
        <dbReference type="ChEBI" id="CHEBI:18420"/>
    </ligand>
</feature>
<feature type="binding site" evidence="1">
    <location>
        <position position="291"/>
    </location>
    <ligand>
        <name>Mg(2+)</name>
        <dbReference type="ChEBI" id="CHEBI:18420"/>
    </ligand>
</feature>
<feature type="binding site" evidence="1">
    <location>
        <position position="318"/>
    </location>
    <ligand>
        <name>Mg(2+)</name>
        <dbReference type="ChEBI" id="CHEBI:18420"/>
    </ligand>
</feature>
<feature type="binding site" evidence="1">
    <location>
        <position position="343"/>
    </location>
    <ligand>
        <name>(2R)-2-phosphoglycerate</name>
        <dbReference type="ChEBI" id="CHEBI:58289"/>
    </ligand>
</feature>
<feature type="binding site" evidence="1">
    <location>
        <position position="372"/>
    </location>
    <ligand>
        <name>(2R)-2-phosphoglycerate</name>
        <dbReference type="ChEBI" id="CHEBI:58289"/>
    </ligand>
</feature>
<feature type="binding site" evidence="1">
    <location>
        <position position="373"/>
    </location>
    <ligand>
        <name>(2R)-2-phosphoglycerate</name>
        <dbReference type="ChEBI" id="CHEBI:58289"/>
    </ligand>
</feature>
<feature type="binding site" evidence="1">
    <location>
        <position position="394"/>
    </location>
    <ligand>
        <name>(2R)-2-phosphoglycerate</name>
        <dbReference type="ChEBI" id="CHEBI:58289"/>
    </ligand>
</feature>
<name>ENO_STRIT</name>
<sequence length="434" mass="47016">MSIITDVYAREVLDSRGNPTLEVEVYTESGAFGRGMVPSGASTGEHEAVELRDGDKSRYGGLGTQKAVDNVNNIIAEAVIGYDVRDQQAIDRAMIALDGTPNKGKLGANAILGVSIAVARAAADYLEIPLYSYLGGFNTKVLPTPMMNIINGGSHSDAPIAFQEFMIVPAGAPTFKEALRWGAEIFHALKKILKSRGLATAVGDEGGFAPRFDGTEDGVETILAAIEAAGYVPGKDVFLGFDCASSEFYDKERKVYDYTKFEGEGAAVRTADEQIDYLEELVNKYPIITIEDGMDENDWDGWKKLTERLGKKVQPVGDDFFVTNTSYLEKGINEACANSILIKVNQIGTLTETFDAIEMAKEAGYTAVVSHRSGETEDSTIADIAVAANAGQIKTGSLSRTDRIAKYNQLLRIEDQLGEVAEYRGLKSFYNLSK</sequence>
<proteinExistence type="inferred from homology"/>